<sequence>MTNIRKTHPLAKIINSSFIDLPTPSNISAWWNFGSLLGVCLILHILTGLFLAMHYTADTTTAFSSVAHICRDVNYGWVIRYMHANGASMFFICLFMHVGRGLYYGSYLFSETWNIGIILLLTIMATAFMGYVLPWGQMSFWGATVITNLLSAIPYIGTDLVEWIWGGFSVDKATLTRFFAFHFILPFIILALAMVHLLFLHETGSNNPSGISSNSDKIPFHPYYTIKDILGVLLLLLALVTLVLFSPDLLGDPDNYTPANPVSTPLHIKPEWYFLFAYAILRSIPNKLGGVLALIFSILILAIIPLLHTSKQRGMMFRPLSQCLFWLLAADLLTLTWIGGQPVEHPLVIIGQLASILYFTILLVLMPIAGIIENNLSKW</sequence>
<gene>
    <name type="primary">MT-CYB</name>
    <name type="synonym">COB</name>
    <name type="synonym">CYTB</name>
    <name type="synonym">MTCYB</name>
</gene>
<protein>
    <recommendedName>
        <fullName>Cytochrome b</fullName>
    </recommendedName>
    <alternativeName>
        <fullName>Complex III subunit 3</fullName>
    </alternativeName>
    <alternativeName>
        <fullName>Complex III subunit III</fullName>
    </alternativeName>
    <alternativeName>
        <fullName>Cytochrome b-c1 complex subunit 3</fullName>
    </alternativeName>
    <alternativeName>
        <fullName>Ubiquinol-cytochrome-c reductase complex cytochrome b subunit</fullName>
    </alternativeName>
</protein>
<proteinExistence type="inferred from homology"/>
<geneLocation type="mitochondrion"/>
<name>CYB_TREOR</name>
<comment type="function">
    <text evidence="2">Component of the ubiquinol-cytochrome c reductase complex (complex III or cytochrome b-c1 complex) that is part of the mitochondrial respiratory chain. The b-c1 complex mediates electron transfer from ubiquinol to cytochrome c. Contributes to the generation of a proton gradient across the mitochondrial membrane that is then used for ATP synthesis.</text>
</comment>
<comment type="cofactor">
    <cofactor evidence="2">
        <name>heme b</name>
        <dbReference type="ChEBI" id="CHEBI:60344"/>
    </cofactor>
    <text evidence="2">Binds 2 heme b groups non-covalently.</text>
</comment>
<comment type="subunit">
    <text evidence="2">The cytochrome bc1 complex contains 11 subunits: 3 respiratory subunits (MT-CYB, CYC1 and UQCRFS1), 2 core proteins (UQCRC1 and UQCRC2) and 6 low-molecular weight proteins (UQCRH/QCR6, UQCRB/QCR7, UQCRQ/QCR8, UQCR10/QCR9, UQCR11/QCR10 and a cleavage product of UQCRFS1). This cytochrome bc1 complex then forms a dimer.</text>
</comment>
<comment type="subcellular location">
    <subcellularLocation>
        <location evidence="2">Mitochondrion inner membrane</location>
        <topology evidence="2">Multi-pass membrane protein</topology>
    </subcellularLocation>
</comment>
<comment type="miscellaneous">
    <text evidence="1">Heme 1 (or BL or b562) is low-potential and absorbs at about 562 nm, and heme 2 (or BH or b566) is high-potential and absorbs at about 566 nm.</text>
</comment>
<comment type="similarity">
    <text evidence="3 4">Belongs to the cytochrome b family.</text>
</comment>
<comment type="caution">
    <text evidence="2">The full-length protein contains only eight transmembrane helices, not nine as predicted by bioinformatics tools.</text>
</comment>
<reference key="1">
    <citation type="journal article" date="1996" name="Mol. Phylogenet. Evol.">
        <title>A phylogeny of the bears (Ursidae) inferred from complete sequences of three mitochondrial genes.</title>
        <authorList>
            <person name="Talbot S.L."/>
            <person name="Shields G.F."/>
        </authorList>
    </citation>
    <scope>NUCLEOTIDE SEQUENCE [GENOMIC DNA]</scope>
</reference>
<evidence type="ECO:0000250" key="1"/>
<evidence type="ECO:0000250" key="2">
    <source>
        <dbReference type="UniProtKB" id="P00157"/>
    </source>
</evidence>
<evidence type="ECO:0000255" key="3">
    <source>
        <dbReference type="PROSITE-ProRule" id="PRU00967"/>
    </source>
</evidence>
<evidence type="ECO:0000255" key="4">
    <source>
        <dbReference type="PROSITE-ProRule" id="PRU00968"/>
    </source>
</evidence>
<keyword id="KW-0249">Electron transport</keyword>
<keyword id="KW-0349">Heme</keyword>
<keyword id="KW-0408">Iron</keyword>
<keyword id="KW-0472">Membrane</keyword>
<keyword id="KW-0479">Metal-binding</keyword>
<keyword id="KW-0496">Mitochondrion</keyword>
<keyword id="KW-0999">Mitochondrion inner membrane</keyword>
<keyword id="KW-0679">Respiratory chain</keyword>
<keyword id="KW-0812">Transmembrane</keyword>
<keyword id="KW-1133">Transmembrane helix</keyword>
<keyword id="KW-0813">Transport</keyword>
<keyword id="KW-0830">Ubiquinone</keyword>
<dbReference type="EMBL" id="U23554">
    <property type="protein sequence ID" value="AAB50570.1"/>
    <property type="molecule type" value="Genomic_DNA"/>
</dbReference>
<dbReference type="SMR" id="Q36089"/>
<dbReference type="GO" id="GO:0005743">
    <property type="term" value="C:mitochondrial inner membrane"/>
    <property type="evidence" value="ECO:0007669"/>
    <property type="project" value="UniProtKB-SubCell"/>
</dbReference>
<dbReference type="GO" id="GO:0045275">
    <property type="term" value="C:respiratory chain complex III"/>
    <property type="evidence" value="ECO:0007669"/>
    <property type="project" value="InterPro"/>
</dbReference>
<dbReference type="GO" id="GO:0046872">
    <property type="term" value="F:metal ion binding"/>
    <property type="evidence" value="ECO:0007669"/>
    <property type="project" value="UniProtKB-KW"/>
</dbReference>
<dbReference type="GO" id="GO:0008121">
    <property type="term" value="F:ubiquinol-cytochrome-c reductase activity"/>
    <property type="evidence" value="ECO:0007669"/>
    <property type="project" value="InterPro"/>
</dbReference>
<dbReference type="GO" id="GO:0006122">
    <property type="term" value="P:mitochondrial electron transport, ubiquinol to cytochrome c"/>
    <property type="evidence" value="ECO:0007669"/>
    <property type="project" value="TreeGrafter"/>
</dbReference>
<dbReference type="CDD" id="cd00290">
    <property type="entry name" value="cytochrome_b_C"/>
    <property type="match status" value="1"/>
</dbReference>
<dbReference type="CDD" id="cd00284">
    <property type="entry name" value="Cytochrome_b_N"/>
    <property type="match status" value="1"/>
</dbReference>
<dbReference type="FunFam" id="1.20.810.10:FF:000002">
    <property type="entry name" value="Cytochrome b"/>
    <property type="match status" value="1"/>
</dbReference>
<dbReference type="Gene3D" id="1.20.810.10">
    <property type="entry name" value="Cytochrome Bc1 Complex, Chain C"/>
    <property type="match status" value="1"/>
</dbReference>
<dbReference type="InterPro" id="IPR005798">
    <property type="entry name" value="Cyt_b/b6_C"/>
</dbReference>
<dbReference type="InterPro" id="IPR036150">
    <property type="entry name" value="Cyt_b/b6_C_sf"/>
</dbReference>
<dbReference type="InterPro" id="IPR005797">
    <property type="entry name" value="Cyt_b/b6_N"/>
</dbReference>
<dbReference type="InterPro" id="IPR027387">
    <property type="entry name" value="Cytb/b6-like_sf"/>
</dbReference>
<dbReference type="InterPro" id="IPR030689">
    <property type="entry name" value="Cytochrome_b"/>
</dbReference>
<dbReference type="InterPro" id="IPR048260">
    <property type="entry name" value="Cytochrome_b_C_euk/bac"/>
</dbReference>
<dbReference type="InterPro" id="IPR048259">
    <property type="entry name" value="Cytochrome_b_N_euk/bac"/>
</dbReference>
<dbReference type="InterPro" id="IPR016174">
    <property type="entry name" value="Di-haem_cyt_TM"/>
</dbReference>
<dbReference type="PANTHER" id="PTHR19271">
    <property type="entry name" value="CYTOCHROME B"/>
    <property type="match status" value="1"/>
</dbReference>
<dbReference type="PANTHER" id="PTHR19271:SF16">
    <property type="entry name" value="CYTOCHROME B"/>
    <property type="match status" value="1"/>
</dbReference>
<dbReference type="Pfam" id="PF00032">
    <property type="entry name" value="Cytochrom_B_C"/>
    <property type="match status" value="1"/>
</dbReference>
<dbReference type="Pfam" id="PF00033">
    <property type="entry name" value="Cytochrome_B"/>
    <property type="match status" value="1"/>
</dbReference>
<dbReference type="PIRSF" id="PIRSF038885">
    <property type="entry name" value="COB"/>
    <property type="match status" value="1"/>
</dbReference>
<dbReference type="SUPFAM" id="SSF81648">
    <property type="entry name" value="a domain/subunit of cytochrome bc1 complex (Ubiquinol-cytochrome c reductase)"/>
    <property type="match status" value="1"/>
</dbReference>
<dbReference type="SUPFAM" id="SSF81342">
    <property type="entry name" value="Transmembrane di-heme cytochromes"/>
    <property type="match status" value="1"/>
</dbReference>
<dbReference type="PROSITE" id="PS51003">
    <property type="entry name" value="CYTB_CTER"/>
    <property type="match status" value="1"/>
</dbReference>
<dbReference type="PROSITE" id="PS51002">
    <property type="entry name" value="CYTB_NTER"/>
    <property type="match status" value="1"/>
</dbReference>
<accession>Q36089</accession>
<feature type="chain" id="PRO_0000061684" description="Cytochrome b">
    <location>
        <begin position="1"/>
        <end position="379"/>
    </location>
</feature>
<feature type="transmembrane region" description="Helical" evidence="2">
    <location>
        <begin position="33"/>
        <end position="53"/>
    </location>
</feature>
<feature type="transmembrane region" description="Helical" evidence="2">
    <location>
        <begin position="77"/>
        <end position="98"/>
    </location>
</feature>
<feature type="transmembrane region" description="Helical" evidence="2">
    <location>
        <begin position="113"/>
        <end position="133"/>
    </location>
</feature>
<feature type="transmembrane region" description="Helical" evidence="2">
    <location>
        <begin position="178"/>
        <end position="198"/>
    </location>
</feature>
<feature type="transmembrane region" description="Helical" evidence="2">
    <location>
        <begin position="226"/>
        <end position="246"/>
    </location>
</feature>
<feature type="transmembrane region" description="Helical" evidence="2">
    <location>
        <begin position="288"/>
        <end position="308"/>
    </location>
</feature>
<feature type="transmembrane region" description="Helical" evidence="2">
    <location>
        <begin position="320"/>
        <end position="340"/>
    </location>
</feature>
<feature type="transmembrane region" description="Helical" evidence="2">
    <location>
        <begin position="347"/>
        <end position="367"/>
    </location>
</feature>
<feature type="binding site" description="axial binding residue" evidence="2">
    <location>
        <position position="83"/>
    </location>
    <ligand>
        <name>heme b</name>
        <dbReference type="ChEBI" id="CHEBI:60344"/>
        <label>b562</label>
    </ligand>
    <ligandPart>
        <name>Fe</name>
        <dbReference type="ChEBI" id="CHEBI:18248"/>
    </ligandPart>
</feature>
<feature type="binding site" description="axial binding residue" evidence="2">
    <location>
        <position position="97"/>
    </location>
    <ligand>
        <name>heme b</name>
        <dbReference type="ChEBI" id="CHEBI:60344"/>
        <label>b566</label>
    </ligand>
    <ligandPart>
        <name>Fe</name>
        <dbReference type="ChEBI" id="CHEBI:18248"/>
    </ligandPart>
</feature>
<feature type="binding site" description="axial binding residue" evidence="2">
    <location>
        <position position="182"/>
    </location>
    <ligand>
        <name>heme b</name>
        <dbReference type="ChEBI" id="CHEBI:60344"/>
        <label>b562</label>
    </ligand>
    <ligandPart>
        <name>Fe</name>
        <dbReference type="ChEBI" id="CHEBI:18248"/>
    </ligandPart>
</feature>
<feature type="binding site" description="axial binding residue" evidence="2">
    <location>
        <position position="196"/>
    </location>
    <ligand>
        <name>heme b</name>
        <dbReference type="ChEBI" id="CHEBI:60344"/>
        <label>b566</label>
    </ligand>
    <ligandPart>
        <name>Fe</name>
        <dbReference type="ChEBI" id="CHEBI:18248"/>
    </ligandPart>
</feature>
<feature type="binding site" evidence="2">
    <location>
        <position position="201"/>
    </location>
    <ligand>
        <name>a ubiquinone</name>
        <dbReference type="ChEBI" id="CHEBI:16389"/>
    </ligand>
</feature>
<organism>
    <name type="scientific">Tremarctos ornatus</name>
    <name type="common">Spectacled bear</name>
    <dbReference type="NCBI Taxonomy" id="9638"/>
    <lineage>
        <taxon>Eukaryota</taxon>
        <taxon>Metazoa</taxon>
        <taxon>Chordata</taxon>
        <taxon>Craniata</taxon>
        <taxon>Vertebrata</taxon>
        <taxon>Euteleostomi</taxon>
        <taxon>Mammalia</taxon>
        <taxon>Eutheria</taxon>
        <taxon>Laurasiatheria</taxon>
        <taxon>Carnivora</taxon>
        <taxon>Caniformia</taxon>
        <taxon>Ursidae</taxon>
        <taxon>Tremarctos</taxon>
    </lineage>
</organism>